<organism>
    <name type="scientific">Hahella chejuensis (strain KCTC 2396)</name>
    <dbReference type="NCBI Taxonomy" id="349521"/>
    <lineage>
        <taxon>Bacteria</taxon>
        <taxon>Pseudomonadati</taxon>
        <taxon>Pseudomonadota</taxon>
        <taxon>Gammaproteobacteria</taxon>
        <taxon>Oceanospirillales</taxon>
        <taxon>Hahellaceae</taxon>
        <taxon>Hahella</taxon>
    </lineage>
</organism>
<evidence type="ECO:0000255" key="1">
    <source>
        <dbReference type="HAMAP-Rule" id="MF_00006"/>
    </source>
</evidence>
<comment type="catalytic activity">
    <reaction evidence="1">
        <text>2-(N(omega)-L-arginino)succinate = fumarate + L-arginine</text>
        <dbReference type="Rhea" id="RHEA:24020"/>
        <dbReference type="ChEBI" id="CHEBI:29806"/>
        <dbReference type="ChEBI" id="CHEBI:32682"/>
        <dbReference type="ChEBI" id="CHEBI:57472"/>
        <dbReference type="EC" id="4.3.2.1"/>
    </reaction>
</comment>
<comment type="pathway">
    <text evidence="1">Amino-acid biosynthesis; L-arginine biosynthesis; L-arginine from L-ornithine and carbamoyl phosphate: step 3/3.</text>
</comment>
<comment type="subcellular location">
    <subcellularLocation>
        <location evidence="1">Cytoplasm</location>
    </subcellularLocation>
</comment>
<comment type="similarity">
    <text evidence="1">Belongs to the lyase 1 family. Argininosuccinate lyase subfamily.</text>
</comment>
<keyword id="KW-0028">Amino-acid biosynthesis</keyword>
<keyword id="KW-0055">Arginine biosynthesis</keyword>
<keyword id="KW-0963">Cytoplasm</keyword>
<keyword id="KW-0456">Lyase</keyword>
<keyword id="KW-1185">Reference proteome</keyword>
<sequence>MTKQDTTDKLWGGRFTEATDAFVERFTASVDFDRRMYHHDIRGSIAHATMLAKVGVLTEEERDQIINGLREIEAEIEAGAFEWSVKLEDVHMNIEARLTQKIGITGKKLHTGRSRNDQVATDIRLYLRDEVDVIAAELLRLIAALADLAEREADAIMPGFTHLQTAQPVTFGHHMLAWAEMLKRDFSRLADCRERFNVSPLGAAALAGTTYSIDRQYTSELLGFNGPAENSLDAVSDRDFAIEFCSFASLLMMHLSRFSEELVLWTSAQFNFINLPDRFCTGSSIMPQKKNPDVPELIRGKSGRVSGHLISLLMLMKSQPLAYNKDNQEDKEPLFDAIDTVKGCLKAYGDMMPAVSVNRDAMAESARRGFSTATDLADYLVRKGLPFRDAHEVVGKAVALGVSSGRDLSEMSLEELREFSADIEVDVFEVLTLEGSVNARNHIGGTAPEQVRAAVVRTREWLKRNTEM</sequence>
<name>ARLY_HAHCH</name>
<accession>Q2SQ67</accession>
<feature type="chain" id="PRO_0000240734" description="Argininosuccinate lyase">
    <location>
        <begin position="1"/>
        <end position="468"/>
    </location>
</feature>
<gene>
    <name evidence="1" type="primary">argH</name>
    <name type="ordered locus">HCH_00294</name>
</gene>
<protein>
    <recommendedName>
        <fullName evidence="1">Argininosuccinate lyase</fullName>
        <shortName evidence="1">ASAL</shortName>
        <ecNumber evidence="1">4.3.2.1</ecNumber>
    </recommendedName>
    <alternativeName>
        <fullName evidence="1">Arginosuccinase</fullName>
    </alternativeName>
</protein>
<dbReference type="EC" id="4.3.2.1" evidence="1"/>
<dbReference type="EMBL" id="CP000155">
    <property type="protein sequence ID" value="ABC27207.1"/>
    <property type="molecule type" value="Genomic_DNA"/>
</dbReference>
<dbReference type="RefSeq" id="WP_011394284.1">
    <property type="nucleotide sequence ID" value="NC_007645.1"/>
</dbReference>
<dbReference type="SMR" id="Q2SQ67"/>
<dbReference type="STRING" id="349521.HCH_00294"/>
<dbReference type="KEGG" id="hch:HCH_00294"/>
<dbReference type="eggNOG" id="COG0165">
    <property type="taxonomic scope" value="Bacteria"/>
</dbReference>
<dbReference type="HOGENOM" id="CLU_027272_2_3_6"/>
<dbReference type="OrthoDB" id="9769623at2"/>
<dbReference type="UniPathway" id="UPA00068">
    <property type="reaction ID" value="UER00114"/>
</dbReference>
<dbReference type="Proteomes" id="UP000000238">
    <property type="component" value="Chromosome"/>
</dbReference>
<dbReference type="GO" id="GO:0005829">
    <property type="term" value="C:cytosol"/>
    <property type="evidence" value="ECO:0007669"/>
    <property type="project" value="TreeGrafter"/>
</dbReference>
<dbReference type="GO" id="GO:0004056">
    <property type="term" value="F:argininosuccinate lyase activity"/>
    <property type="evidence" value="ECO:0007669"/>
    <property type="project" value="UniProtKB-UniRule"/>
</dbReference>
<dbReference type="GO" id="GO:0042450">
    <property type="term" value="P:arginine biosynthetic process via ornithine"/>
    <property type="evidence" value="ECO:0007669"/>
    <property type="project" value="InterPro"/>
</dbReference>
<dbReference type="GO" id="GO:0006526">
    <property type="term" value="P:L-arginine biosynthetic process"/>
    <property type="evidence" value="ECO:0007669"/>
    <property type="project" value="UniProtKB-UniRule"/>
</dbReference>
<dbReference type="CDD" id="cd01359">
    <property type="entry name" value="Argininosuccinate_lyase"/>
    <property type="match status" value="1"/>
</dbReference>
<dbReference type="FunFam" id="1.10.275.10:FF:000002">
    <property type="entry name" value="Argininosuccinate lyase"/>
    <property type="match status" value="1"/>
</dbReference>
<dbReference type="FunFam" id="1.10.40.30:FF:000001">
    <property type="entry name" value="Argininosuccinate lyase"/>
    <property type="match status" value="1"/>
</dbReference>
<dbReference type="FunFam" id="1.20.200.10:FF:000015">
    <property type="entry name" value="argininosuccinate lyase isoform X2"/>
    <property type="match status" value="1"/>
</dbReference>
<dbReference type="Gene3D" id="1.10.40.30">
    <property type="entry name" value="Fumarase/aspartase (C-terminal domain)"/>
    <property type="match status" value="1"/>
</dbReference>
<dbReference type="Gene3D" id="1.20.200.10">
    <property type="entry name" value="Fumarase/aspartase (Central domain)"/>
    <property type="match status" value="1"/>
</dbReference>
<dbReference type="Gene3D" id="1.10.275.10">
    <property type="entry name" value="Fumarase/aspartase (N-terminal domain)"/>
    <property type="match status" value="1"/>
</dbReference>
<dbReference type="HAMAP" id="MF_00006">
    <property type="entry name" value="Arg_succ_lyase"/>
    <property type="match status" value="1"/>
</dbReference>
<dbReference type="InterPro" id="IPR029419">
    <property type="entry name" value="Arg_succ_lyase_C"/>
</dbReference>
<dbReference type="InterPro" id="IPR009049">
    <property type="entry name" value="Argininosuccinate_lyase"/>
</dbReference>
<dbReference type="InterPro" id="IPR024083">
    <property type="entry name" value="Fumarase/histidase_N"/>
</dbReference>
<dbReference type="InterPro" id="IPR020557">
    <property type="entry name" value="Fumarate_lyase_CS"/>
</dbReference>
<dbReference type="InterPro" id="IPR000362">
    <property type="entry name" value="Fumarate_lyase_fam"/>
</dbReference>
<dbReference type="InterPro" id="IPR022761">
    <property type="entry name" value="Fumarate_lyase_N"/>
</dbReference>
<dbReference type="InterPro" id="IPR008948">
    <property type="entry name" value="L-Aspartase-like"/>
</dbReference>
<dbReference type="NCBIfam" id="TIGR00838">
    <property type="entry name" value="argH"/>
    <property type="match status" value="1"/>
</dbReference>
<dbReference type="PANTHER" id="PTHR43814">
    <property type="entry name" value="ARGININOSUCCINATE LYASE"/>
    <property type="match status" value="1"/>
</dbReference>
<dbReference type="PANTHER" id="PTHR43814:SF1">
    <property type="entry name" value="ARGININOSUCCINATE LYASE"/>
    <property type="match status" value="1"/>
</dbReference>
<dbReference type="Pfam" id="PF14698">
    <property type="entry name" value="ASL_C2"/>
    <property type="match status" value="1"/>
</dbReference>
<dbReference type="Pfam" id="PF00206">
    <property type="entry name" value="Lyase_1"/>
    <property type="match status" value="1"/>
</dbReference>
<dbReference type="PRINTS" id="PR00145">
    <property type="entry name" value="ARGSUCLYASE"/>
</dbReference>
<dbReference type="PRINTS" id="PR00149">
    <property type="entry name" value="FUMRATELYASE"/>
</dbReference>
<dbReference type="SUPFAM" id="SSF48557">
    <property type="entry name" value="L-aspartase-like"/>
    <property type="match status" value="1"/>
</dbReference>
<dbReference type="PROSITE" id="PS00163">
    <property type="entry name" value="FUMARATE_LYASES"/>
    <property type="match status" value="1"/>
</dbReference>
<reference key="1">
    <citation type="journal article" date="2005" name="Nucleic Acids Res.">
        <title>Genomic blueprint of Hahella chejuensis, a marine microbe producing an algicidal agent.</title>
        <authorList>
            <person name="Jeong H."/>
            <person name="Yim J.H."/>
            <person name="Lee C."/>
            <person name="Choi S.-H."/>
            <person name="Park Y.K."/>
            <person name="Yoon S.H."/>
            <person name="Hur C.-G."/>
            <person name="Kang H.-Y."/>
            <person name="Kim D."/>
            <person name="Lee H.H."/>
            <person name="Park K.H."/>
            <person name="Park S.-H."/>
            <person name="Park H.-S."/>
            <person name="Lee H.K."/>
            <person name="Oh T.K."/>
            <person name="Kim J.F."/>
        </authorList>
    </citation>
    <scope>NUCLEOTIDE SEQUENCE [LARGE SCALE GENOMIC DNA]</scope>
    <source>
        <strain>KCTC 2396</strain>
    </source>
</reference>
<proteinExistence type="inferred from homology"/>